<dbReference type="EC" id="3.6.1.15" evidence="1"/>
<dbReference type="EC" id="3.6.1.6" evidence="1"/>
<dbReference type="EMBL" id="CP000921">
    <property type="protein sequence ID" value="ACO22744.1"/>
    <property type="molecule type" value="Genomic_DNA"/>
</dbReference>
<dbReference type="RefSeq" id="WP_000775321.1">
    <property type="nucleotide sequence ID" value="NC_012469.1"/>
</dbReference>
<dbReference type="SMR" id="C1CTD2"/>
<dbReference type="KEGG" id="snt:SPT_1848"/>
<dbReference type="HOGENOM" id="CLU_109787_1_0_9"/>
<dbReference type="GO" id="GO:0000287">
    <property type="term" value="F:magnesium ion binding"/>
    <property type="evidence" value="ECO:0007669"/>
    <property type="project" value="UniProtKB-UniRule"/>
</dbReference>
<dbReference type="GO" id="GO:0017110">
    <property type="term" value="F:nucleoside diphosphate phosphatase activity"/>
    <property type="evidence" value="ECO:0007669"/>
    <property type="project" value="UniProtKB-UniRule"/>
</dbReference>
<dbReference type="GO" id="GO:0017111">
    <property type="term" value="F:ribonucleoside triphosphate phosphatase activity"/>
    <property type="evidence" value="ECO:0007669"/>
    <property type="project" value="UniProtKB-UniRule"/>
</dbReference>
<dbReference type="Gene3D" id="2.40.380.10">
    <property type="entry name" value="FomD-like"/>
    <property type="match status" value="1"/>
</dbReference>
<dbReference type="HAMAP" id="MF_01568">
    <property type="entry name" value="Ntdp"/>
    <property type="match status" value="1"/>
</dbReference>
<dbReference type="InterPro" id="IPR007295">
    <property type="entry name" value="DUF402"/>
</dbReference>
<dbReference type="InterPro" id="IPR035930">
    <property type="entry name" value="FomD-like_sf"/>
</dbReference>
<dbReference type="InterPro" id="IPR050212">
    <property type="entry name" value="Ntdp-like"/>
</dbReference>
<dbReference type="InterPro" id="IPR016882">
    <property type="entry name" value="SA1684"/>
</dbReference>
<dbReference type="NCBIfam" id="NF010183">
    <property type="entry name" value="PRK13662.1"/>
    <property type="match status" value="1"/>
</dbReference>
<dbReference type="PANTHER" id="PTHR39159">
    <property type="match status" value="1"/>
</dbReference>
<dbReference type="PANTHER" id="PTHR39159:SF1">
    <property type="entry name" value="UPF0374 PROTEIN YGAC"/>
    <property type="match status" value="1"/>
</dbReference>
<dbReference type="Pfam" id="PF04167">
    <property type="entry name" value="DUF402"/>
    <property type="match status" value="1"/>
</dbReference>
<dbReference type="PIRSF" id="PIRSF028345">
    <property type="entry name" value="UCP028345"/>
    <property type="match status" value="1"/>
</dbReference>
<dbReference type="SUPFAM" id="SSF159234">
    <property type="entry name" value="FomD-like"/>
    <property type="match status" value="1"/>
</dbReference>
<name>NTDP_STRZT</name>
<feature type="chain" id="PRO_1000185480" description="Nucleoside triphosphate/diphosphate phosphatase">
    <location>
        <begin position="1"/>
        <end position="177"/>
    </location>
</feature>
<feature type="active site" description="Proton donor" evidence="1">
    <location>
        <position position="23"/>
    </location>
</feature>
<feature type="binding site" evidence="1">
    <location>
        <position position="87"/>
    </location>
    <ligand>
        <name>Mg(2+)</name>
        <dbReference type="ChEBI" id="CHEBI:18420"/>
        <label>1</label>
    </ligand>
</feature>
<feature type="binding site" evidence="1">
    <location>
        <position position="103"/>
    </location>
    <ligand>
        <name>Mg(2+)</name>
        <dbReference type="ChEBI" id="CHEBI:18420"/>
        <label>1</label>
    </ligand>
</feature>
<feature type="binding site" evidence="1">
    <location>
        <position position="105"/>
    </location>
    <ligand>
        <name>Mg(2+)</name>
        <dbReference type="ChEBI" id="CHEBI:18420"/>
        <label>2</label>
    </ligand>
</feature>
<feature type="binding site" evidence="1">
    <location>
        <position position="107"/>
    </location>
    <ligand>
        <name>Mg(2+)</name>
        <dbReference type="ChEBI" id="CHEBI:18420"/>
        <label>1</label>
    </ligand>
</feature>
<feature type="binding site" evidence="1">
    <location>
        <position position="107"/>
    </location>
    <ligand>
        <name>Mg(2+)</name>
        <dbReference type="ChEBI" id="CHEBI:18420"/>
        <label>2</label>
    </ligand>
</feature>
<feature type="binding site" evidence="1">
    <location>
        <position position="120"/>
    </location>
    <ligand>
        <name>Mg(2+)</name>
        <dbReference type="ChEBI" id="CHEBI:18420"/>
        <label>2</label>
    </ligand>
</feature>
<feature type="binding site" evidence="1">
    <location>
        <position position="123"/>
    </location>
    <ligand>
        <name>Mg(2+)</name>
        <dbReference type="ChEBI" id="CHEBI:18420"/>
        <label>2</label>
    </ligand>
</feature>
<sequence>MKLPKEGDFITIQSYKHDGSLHRTWRDTMVLKTTENAIIGVNDHTLVTESDGRRWVTREPAIVYFHKKYWFNIIAMIRDNGTSYYCNMASPYYLDEEALKYIDYDLDVKIFTDGEKRLLDVEEYERHKRKMNYSDDLDYILKEHVKILVDWINNGRGPFSEAYVNIWYKRYVELKNR</sequence>
<gene>
    <name type="ordered locus">SPT_1848</name>
</gene>
<keyword id="KW-0378">Hydrolase</keyword>
<keyword id="KW-0460">Magnesium</keyword>
<keyword id="KW-0479">Metal-binding</keyword>
<proteinExistence type="inferred from homology"/>
<evidence type="ECO:0000255" key="1">
    <source>
        <dbReference type="HAMAP-Rule" id="MF_01568"/>
    </source>
</evidence>
<protein>
    <recommendedName>
        <fullName evidence="1">Nucleoside triphosphate/diphosphate phosphatase</fullName>
        <ecNumber evidence="1">3.6.1.15</ecNumber>
        <ecNumber evidence="1">3.6.1.6</ecNumber>
    </recommendedName>
</protein>
<organism>
    <name type="scientific">Streptococcus pneumoniae (strain Taiwan19F-14)</name>
    <dbReference type="NCBI Taxonomy" id="487213"/>
    <lineage>
        <taxon>Bacteria</taxon>
        <taxon>Bacillati</taxon>
        <taxon>Bacillota</taxon>
        <taxon>Bacilli</taxon>
        <taxon>Lactobacillales</taxon>
        <taxon>Streptococcaceae</taxon>
        <taxon>Streptococcus</taxon>
    </lineage>
</organism>
<reference key="1">
    <citation type="journal article" date="2010" name="Genome Biol.">
        <title>Structure and dynamics of the pan-genome of Streptococcus pneumoniae and closely related species.</title>
        <authorList>
            <person name="Donati C."/>
            <person name="Hiller N.L."/>
            <person name="Tettelin H."/>
            <person name="Muzzi A."/>
            <person name="Croucher N.J."/>
            <person name="Angiuoli S.V."/>
            <person name="Oggioni M."/>
            <person name="Dunning Hotopp J.C."/>
            <person name="Hu F.Z."/>
            <person name="Riley D.R."/>
            <person name="Covacci A."/>
            <person name="Mitchell T.J."/>
            <person name="Bentley S.D."/>
            <person name="Kilian M."/>
            <person name="Ehrlich G.D."/>
            <person name="Rappuoli R."/>
            <person name="Moxon E.R."/>
            <person name="Masignani V."/>
        </authorList>
    </citation>
    <scope>NUCLEOTIDE SEQUENCE [LARGE SCALE GENOMIC DNA]</scope>
    <source>
        <strain>Taiwan19F-14</strain>
    </source>
</reference>
<comment type="function">
    <text evidence="1">Has nucleoside phosphatase activity towards nucleoside triphosphates and nucleoside diphosphates.</text>
</comment>
<comment type="catalytic activity">
    <reaction evidence="1">
        <text>a ribonucleoside 5'-triphosphate + H2O = a ribonucleoside 5'-diphosphate + phosphate + H(+)</text>
        <dbReference type="Rhea" id="RHEA:23680"/>
        <dbReference type="ChEBI" id="CHEBI:15377"/>
        <dbReference type="ChEBI" id="CHEBI:15378"/>
        <dbReference type="ChEBI" id="CHEBI:43474"/>
        <dbReference type="ChEBI" id="CHEBI:57930"/>
        <dbReference type="ChEBI" id="CHEBI:61557"/>
        <dbReference type="EC" id="3.6.1.15"/>
    </reaction>
</comment>
<comment type="catalytic activity">
    <reaction evidence="1">
        <text>a ribonucleoside 5'-diphosphate + H2O = a ribonucleoside 5'-phosphate + phosphate + H(+)</text>
        <dbReference type="Rhea" id="RHEA:36799"/>
        <dbReference type="ChEBI" id="CHEBI:15377"/>
        <dbReference type="ChEBI" id="CHEBI:15378"/>
        <dbReference type="ChEBI" id="CHEBI:43474"/>
        <dbReference type="ChEBI" id="CHEBI:57930"/>
        <dbReference type="ChEBI" id="CHEBI:58043"/>
        <dbReference type="EC" id="3.6.1.6"/>
    </reaction>
</comment>
<comment type="cofactor">
    <cofactor evidence="1">
        <name>Mg(2+)</name>
        <dbReference type="ChEBI" id="CHEBI:18420"/>
    </cofactor>
</comment>
<comment type="similarity">
    <text evidence="1">Belongs to the Ntdp family.</text>
</comment>
<accession>C1CTD2</accession>